<evidence type="ECO:0000250" key="1">
    <source>
        <dbReference type="UniProtKB" id="P46654"/>
    </source>
</evidence>
<evidence type="ECO:0000255" key="2">
    <source>
        <dbReference type="HAMAP-Rule" id="MF_03015"/>
    </source>
</evidence>
<evidence type="ECO:0000269" key="3">
    <source>
    </source>
</evidence>
<evidence type="ECO:0000269" key="4">
    <source>
    </source>
</evidence>
<evidence type="ECO:0000269" key="5">
    <source>
    </source>
</evidence>
<evidence type="ECO:0000305" key="6"/>
<comment type="function">
    <text evidence="1 3">Component of the ribosome, a large ribonucleoprotein complex responsible for the synthesis of proteins in the cell. The small ribosomal subunit (SSU) binds messenger RNAs (mRNAs) and translates the encoded message by selecting cognate aminoacyl-transfer RNA (tRNA) molecules. The large subunit (LSU) contains the ribosomal catalytic site termed the peptidyl transferase center (PTC), which catalyzes the formation of peptide bonds, thereby polymerizing the amino acids delivered by tRNAs into a polypeptide chain. The nascent polypeptides leave the ribosome through a tunnel in the LSU and interact with protein factors that function in enzymatic processing, targeting, and the membrane insertion of nascent chains at the exit of the ribosomal tunnel (By similarity). uS2 is required for the assembly and/or stability of the 40S ribosomal subunit. Required for the processing of the 20S rRNA-precursor to mature 18S rRNA in a late step of the maturation of 40S ribosomal subunits (PubMed:14623272).</text>
</comment>
<comment type="subunit">
    <text evidence="2 3">Component of the small ribosomal subunit (SSU). Mature yeast ribosomes consist of a small (40S) and a large (60S) subunit. The 40S small subunit contains 1 molecule of ribosomal RNA (18S rRNA) and at least 33 different proteins. The large 60S subunit contains 3 rRNA molecules (25S, 5.8S and 5S rRNA) and at least 46 different proteins (By similarity). Interacts with eS21 (PubMed:14623272).</text>
</comment>
<comment type="subcellular location">
    <subcellularLocation>
        <location evidence="2 4">Cytoplasm</location>
    </subcellularLocation>
</comment>
<comment type="disruption phenotype">
    <text evidence="3">Deficiency of 40S ribosomal subunit formation, this is likely to be caused by insufficient 18S rRNA stability.</text>
</comment>
<comment type="miscellaneous">
    <text>There are 2 genes for uS2 in S.pombe.</text>
</comment>
<comment type="similarity">
    <text evidence="2">Belongs to the universal ribosomal protein uS2 family.</text>
</comment>
<keyword id="KW-0963">Cytoplasm</keyword>
<keyword id="KW-0597">Phosphoprotein</keyword>
<keyword id="KW-1185">Reference proteome</keyword>
<keyword id="KW-0687">Ribonucleoprotein</keyword>
<keyword id="KW-0689">Ribosomal protein</keyword>
<keyword id="KW-0690">Ribosome biogenesis</keyword>
<keyword id="KW-0698">rRNA processing</keyword>
<accession>Q9P546</accession>
<dbReference type="EMBL" id="CU329670">
    <property type="protein sequence ID" value="CAB92099.1"/>
    <property type="molecule type" value="Genomic_DNA"/>
</dbReference>
<dbReference type="RefSeq" id="NP_594413.1">
    <property type="nucleotide sequence ID" value="NM_001019843.2"/>
</dbReference>
<dbReference type="SMR" id="Q9P546"/>
<dbReference type="BioGRID" id="279718">
    <property type="interactions" value="5"/>
</dbReference>
<dbReference type="FunCoup" id="Q9P546">
    <property type="interactions" value="433"/>
</dbReference>
<dbReference type="STRING" id="284812.Q9P546"/>
<dbReference type="iPTMnet" id="Q9P546"/>
<dbReference type="PaxDb" id="4896-SPAPJ698.02c.1"/>
<dbReference type="EnsemblFungi" id="SPAPJ698.02c.1">
    <property type="protein sequence ID" value="SPAPJ698.02c.1:pep"/>
    <property type="gene ID" value="SPAPJ698.02c"/>
</dbReference>
<dbReference type="GeneID" id="2543293"/>
<dbReference type="KEGG" id="spo:2543293"/>
<dbReference type="PomBase" id="SPAPJ698.02c">
    <property type="gene designation" value="rps002"/>
</dbReference>
<dbReference type="VEuPathDB" id="FungiDB:SPAPJ698.02c"/>
<dbReference type="eggNOG" id="KOG0830">
    <property type="taxonomic scope" value="Eukaryota"/>
</dbReference>
<dbReference type="HOGENOM" id="CLU_058171_1_0_1"/>
<dbReference type="InParanoid" id="Q9P546"/>
<dbReference type="OMA" id="WEGDAEW"/>
<dbReference type="PhylomeDB" id="Q9P546"/>
<dbReference type="PRO" id="PR:Q9P546"/>
<dbReference type="Proteomes" id="UP000002485">
    <property type="component" value="Chromosome I"/>
</dbReference>
<dbReference type="GO" id="GO:0005829">
    <property type="term" value="C:cytosol"/>
    <property type="evidence" value="ECO:0007005"/>
    <property type="project" value="PomBase"/>
</dbReference>
<dbReference type="GO" id="GO:0022627">
    <property type="term" value="C:cytosolic small ribosomal subunit"/>
    <property type="evidence" value="ECO:0000318"/>
    <property type="project" value="GO_Central"/>
</dbReference>
<dbReference type="GO" id="GO:0003735">
    <property type="term" value="F:structural constituent of ribosome"/>
    <property type="evidence" value="ECO:0000318"/>
    <property type="project" value="GO_Central"/>
</dbReference>
<dbReference type="GO" id="GO:0002181">
    <property type="term" value="P:cytoplasmic translation"/>
    <property type="evidence" value="ECO:0000318"/>
    <property type="project" value="GO_Central"/>
</dbReference>
<dbReference type="GO" id="GO:0000028">
    <property type="term" value="P:ribosomal small subunit assembly"/>
    <property type="evidence" value="ECO:0000318"/>
    <property type="project" value="GO_Central"/>
</dbReference>
<dbReference type="GO" id="GO:0042274">
    <property type="term" value="P:ribosomal small subunit biogenesis"/>
    <property type="evidence" value="ECO:0000315"/>
    <property type="project" value="PomBase"/>
</dbReference>
<dbReference type="GO" id="GO:0006364">
    <property type="term" value="P:rRNA processing"/>
    <property type="evidence" value="ECO:0007669"/>
    <property type="project" value="UniProtKB-KW"/>
</dbReference>
<dbReference type="CDD" id="cd01425">
    <property type="entry name" value="RPS2"/>
    <property type="match status" value="1"/>
</dbReference>
<dbReference type="FunFam" id="3.40.50.10490:FF:000010">
    <property type="entry name" value="40S ribosomal protein S0"/>
    <property type="match status" value="1"/>
</dbReference>
<dbReference type="Gene3D" id="3.40.50.10490">
    <property type="entry name" value="Glucose-6-phosphate isomerase like protein, domain 1"/>
    <property type="match status" value="1"/>
</dbReference>
<dbReference type="HAMAP" id="MF_03015">
    <property type="entry name" value="Ribosomal_S2_euk"/>
    <property type="match status" value="1"/>
</dbReference>
<dbReference type="InterPro" id="IPR001865">
    <property type="entry name" value="Ribosomal_uS2"/>
</dbReference>
<dbReference type="InterPro" id="IPR032281">
    <property type="entry name" value="Ribosomal_uS2_C"/>
</dbReference>
<dbReference type="InterPro" id="IPR018130">
    <property type="entry name" value="Ribosomal_uS2_CS"/>
</dbReference>
<dbReference type="InterPro" id="IPR027498">
    <property type="entry name" value="Ribosomal_uS2_euk"/>
</dbReference>
<dbReference type="InterPro" id="IPR005707">
    <property type="entry name" value="Ribosomal_uS2_euk/arc"/>
</dbReference>
<dbReference type="InterPro" id="IPR023591">
    <property type="entry name" value="Ribosomal_uS2_flav_dom_sf"/>
</dbReference>
<dbReference type="NCBIfam" id="TIGR01012">
    <property type="entry name" value="uS2_euk_arch"/>
    <property type="match status" value="1"/>
</dbReference>
<dbReference type="PANTHER" id="PTHR11489">
    <property type="entry name" value="40S RIBOSOMAL PROTEIN SA"/>
    <property type="match status" value="1"/>
</dbReference>
<dbReference type="Pfam" id="PF16122">
    <property type="entry name" value="40S_SA_C"/>
    <property type="match status" value="1"/>
</dbReference>
<dbReference type="Pfam" id="PF00318">
    <property type="entry name" value="Ribosomal_S2"/>
    <property type="match status" value="1"/>
</dbReference>
<dbReference type="PRINTS" id="PR00395">
    <property type="entry name" value="RIBOSOMALS2"/>
</dbReference>
<dbReference type="SUPFAM" id="SSF52313">
    <property type="entry name" value="Ribosomal protein S2"/>
    <property type="match status" value="1"/>
</dbReference>
<dbReference type="PROSITE" id="PS00963">
    <property type="entry name" value="RIBOSOMAL_S2_2"/>
    <property type="match status" value="1"/>
</dbReference>
<protein>
    <recommendedName>
        <fullName evidence="2 6">Small ribosomal subunit protein uS2B</fullName>
    </recommendedName>
    <alternativeName>
        <fullName evidence="2">40S ribosomal protein S0-B</fullName>
    </alternativeName>
</protein>
<gene>
    <name type="primary">rps002</name>
    <name type="synonym">rps0b</name>
    <name type="synonym">rpsa2</name>
    <name type="ORF">SPAPJ698.02c</name>
</gene>
<name>RSSA2_SCHPO</name>
<organism>
    <name type="scientific">Schizosaccharomyces pombe (strain 972 / ATCC 24843)</name>
    <name type="common">Fission yeast</name>
    <dbReference type="NCBI Taxonomy" id="284812"/>
    <lineage>
        <taxon>Eukaryota</taxon>
        <taxon>Fungi</taxon>
        <taxon>Dikarya</taxon>
        <taxon>Ascomycota</taxon>
        <taxon>Taphrinomycotina</taxon>
        <taxon>Schizosaccharomycetes</taxon>
        <taxon>Schizosaccharomycetales</taxon>
        <taxon>Schizosaccharomycetaceae</taxon>
        <taxon>Schizosaccharomyces</taxon>
    </lineage>
</organism>
<feature type="chain" id="PRO_0000134369" description="Small ribosomal subunit protein uS2B">
    <location>
        <begin position="1"/>
        <end position="287"/>
    </location>
</feature>
<feature type="modified residue" description="Phosphoserine" evidence="5">
    <location>
        <position position="46"/>
    </location>
</feature>
<sequence>MAESIARPSVLNATDDDIKNLLAADSHIGSKNLEVRMENYVWKRRSDGIHIINLGKTWEKLVLAARVIATIENPADVCVISSRPYGHRAVLKFAAHTGATAIAGRFTPGNFTNYITRTYREPRLIIVTDPRADAQAIKEASFVNIPVIALCDTDSILNHVDVAIPINNKGYKSIGLAWYLLAREVLRLRGNISRTTAWEVMPDLYFYRDPEEIEREEEQKAAAAAAAEEEAQLAAQTAAAEFEVTDSAAGTVDPTILDNATAGQVGQTTWEGDAEWNITGAAPSEWA</sequence>
<reference key="1">
    <citation type="journal article" date="2002" name="Nature">
        <title>The genome sequence of Schizosaccharomyces pombe.</title>
        <authorList>
            <person name="Wood V."/>
            <person name="Gwilliam R."/>
            <person name="Rajandream M.A."/>
            <person name="Lyne M.H."/>
            <person name="Lyne R."/>
            <person name="Stewart A."/>
            <person name="Sgouros J.G."/>
            <person name="Peat N."/>
            <person name="Hayles J."/>
            <person name="Baker S.G."/>
            <person name="Basham D."/>
            <person name="Bowman S."/>
            <person name="Brooks K."/>
            <person name="Brown D."/>
            <person name="Brown S."/>
            <person name="Chillingworth T."/>
            <person name="Churcher C.M."/>
            <person name="Collins M."/>
            <person name="Connor R."/>
            <person name="Cronin A."/>
            <person name="Davis P."/>
            <person name="Feltwell T."/>
            <person name="Fraser A."/>
            <person name="Gentles S."/>
            <person name="Goble A."/>
            <person name="Hamlin N."/>
            <person name="Harris D.E."/>
            <person name="Hidalgo J."/>
            <person name="Hodgson G."/>
            <person name="Holroyd S."/>
            <person name="Hornsby T."/>
            <person name="Howarth S."/>
            <person name="Huckle E.J."/>
            <person name="Hunt S."/>
            <person name="Jagels K."/>
            <person name="James K.D."/>
            <person name="Jones L."/>
            <person name="Jones M."/>
            <person name="Leather S."/>
            <person name="McDonald S."/>
            <person name="McLean J."/>
            <person name="Mooney P."/>
            <person name="Moule S."/>
            <person name="Mungall K.L."/>
            <person name="Murphy L.D."/>
            <person name="Niblett D."/>
            <person name="Odell C."/>
            <person name="Oliver K."/>
            <person name="O'Neil S."/>
            <person name="Pearson D."/>
            <person name="Quail M.A."/>
            <person name="Rabbinowitsch E."/>
            <person name="Rutherford K.M."/>
            <person name="Rutter S."/>
            <person name="Saunders D."/>
            <person name="Seeger K."/>
            <person name="Sharp S."/>
            <person name="Skelton J."/>
            <person name="Simmonds M.N."/>
            <person name="Squares R."/>
            <person name="Squares S."/>
            <person name="Stevens K."/>
            <person name="Taylor K."/>
            <person name="Taylor R.G."/>
            <person name="Tivey A."/>
            <person name="Walsh S.V."/>
            <person name="Warren T."/>
            <person name="Whitehead S."/>
            <person name="Woodward J.R."/>
            <person name="Volckaert G."/>
            <person name="Aert R."/>
            <person name="Robben J."/>
            <person name="Grymonprez B."/>
            <person name="Weltjens I."/>
            <person name="Vanstreels E."/>
            <person name="Rieger M."/>
            <person name="Schaefer M."/>
            <person name="Mueller-Auer S."/>
            <person name="Gabel C."/>
            <person name="Fuchs M."/>
            <person name="Duesterhoeft A."/>
            <person name="Fritzc C."/>
            <person name="Holzer E."/>
            <person name="Moestl D."/>
            <person name="Hilbert H."/>
            <person name="Borzym K."/>
            <person name="Langer I."/>
            <person name="Beck A."/>
            <person name="Lehrach H."/>
            <person name="Reinhardt R."/>
            <person name="Pohl T.M."/>
            <person name="Eger P."/>
            <person name="Zimmermann W."/>
            <person name="Wedler H."/>
            <person name="Wambutt R."/>
            <person name="Purnelle B."/>
            <person name="Goffeau A."/>
            <person name="Cadieu E."/>
            <person name="Dreano S."/>
            <person name="Gloux S."/>
            <person name="Lelaure V."/>
            <person name="Mottier S."/>
            <person name="Galibert F."/>
            <person name="Aves S.J."/>
            <person name="Xiang Z."/>
            <person name="Hunt C."/>
            <person name="Moore K."/>
            <person name="Hurst S.M."/>
            <person name="Lucas M."/>
            <person name="Rochet M."/>
            <person name="Gaillardin C."/>
            <person name="Tallada V.A."/>
            <person name="Garzon A."/>
            <person name="Thode G."/>
            <person name="Daga R.R."/>
            <person name="Cruzado L."/>
            <person name="Jimenez J."/>
            <person name="Sanchez M."/>
            <person name="del Rey F."/>
            <person name="Benito J."/>
            <person name="Dominguez A."/>
            <person name="Revuelta J.L."/>
            <person name="Moreno S."/>
            <person name="Armstrong J."/>
            <person name="Forsburg S.L."/>
            <person name="Cerutti L."/>
            <person name="Lowe T."/>
            <person name="McCombie W.R."/>
            <person name="Paulsen I."/>
            <person name="Potashkin J."/>
            <person name="Shpakovski G.V."/>
            <person name="Ussery D."/>
            <person name="Barrell B.G."/>
            <person name="Nurse P."/>
        </authorList>
    </citation>
    <scope>NUCLEOTIDE SEQUENCE [LARGE SCALE GENOMIC DNA]</scope>
    <source>
        <strain>972 / ATCC 24843</strain>
    </source>
</reference>
<reference key="2">
    <citation type="journal article" date="2003" name="Biochem. Biophys. Res. Commun.">
        <title>Ribosomal proteins S0 and S21 are involved in the stability of 18S rRNA in fission yeast, Schizosaccharomyces pombe.</title>
        <authorList>
            <person name="Sato M."/>
            <person name="Kong C.J."/>
            <person name="Yoshida H."/>
            <person name="Nakamura T."/>
            <person name="Wada A."/>
            <person name="Shimoda C."/>
            <person name="Kaneda Y."/>
        </authorList>
    </citation>
    <scope>FUNCTION</scope>
    <scope>INTERACTION WITH RPS21</scope>
    <scope>DISRUPTION PHENOTYPE</scope>
</reference>
<reference key="3">
    <citation type="journal article" date="2006" name="Nat. Biotechnol.">
        <title>ORFeome cloning and global analysis of protein localization in the fission yeast Schizosaccharomyces pombe.</title>
        <authorList>
            <person name="Matsuyama A."/>
            <person name="Arai R."/>
            <person name="Yashiroda Y."/>
            <person name="Shirai A."/>
            <person name="Kamata A."/>
            <person name="Sekido S."/>
            <person name="Kobayashi Y."/>
            <person name="Hashimoto A."/>
            <person name="Hamamoto M."/>
            <person name="Hiraoka Y."/>
            <person name="Horinouchi S."/>
            <person name="Yoshida M."/>
        </authorList>
    </citation>
    <scope>SUBCELLULAR LOCATION [LARGE SCALE ANALYSIS]</scope>
</reference>
<reference key="4">
    <citation type="journal article" date="2008" name="J. Proteome Res.">
        <title>Phosphoproteome analysis of fission yeast.</title>
        <authorList>
            <person name="Wilson-Grady J.T."/>
            <person name="Villen J."/>
            <person name="Gygi S.P."/>
        </authorList>
    </citation>
    <scope>PHOSPHORYLATION [LARGE SCALE ANALYSIS] AT SER-46</scope>
    <scope>IDENTIFICATION BY MASS SPECTROMETRY</scope>
</reference>
<proteinExistence type="evidence at protein level"/>